<comment type="function">
    <text evidence="1">Is probably a protein kinase regulator of UbiI activity which is involved in aerobic coenzyme Q (ubiquinone) biosynthesis.</text>
</comment>
<comment type="pathway">
    <text>Cofactor biosynthesis; ubiquinone biosynthesis [regulation].</text>
</comment>
<comment type="subcellular location">
    <subcellularLocation>
        <location evidence="1">Cell inner membrane</location>
        <topology evidence="1">Multi-pass membrane protein</topology>
    </subcellularLocation>
</comment>
<comment type="similarity">
    <text evidence="1">Belongs to the ABC1 family. UbiB subfamily.</text>
</comment>
<sequence length="537" mass="61998">MKLLAVRRLLRIQSVVVRYRLDDLLFDQPLLPWWLRALGYLLPWRWLPRRRSEQPRAVRLRLALQDLGPIFIKFGQILSTRRDLLPEDIADELTWLQDRVPPFNPQQSVALIEEQLGARVDEAFARFDSEPLASASVAQVHAAQLKTGEEVVVKVVRPGLKAVIRQDLAWLYLFARLAERASTEARRLHLVDVVSDYEKTIYDELDLLREAANASQLKRNFEGSPLLYVPQIYWDWCRPKVLVMERIYGVPVTDLAALVDQGTDLKLLAERGVEIFFTQVFRDSFFHADMHPGNIFVSTRQPWDPQYIAIDCGIVGSLTPQDQDYLARNLLAFFKRDYRKVAQLHIDSGWVPADTQVNEFEAAIRTVCEPIFEKPLKDISFGQLLLRLFQTARRFNMEVQPQLVLLQKTLLNIEGLGRQLYPELDLWTTAKPFLERWMRKRMSPKAMLDNLQGQLEQLPHLAQMTRTALEDISRPAWDTRKRERHDHHLLRLLGAALLAGGVLLALQTPPTSANAWPSWLMLASGLYLLVGRRRLSD</sequence>
<name>UBIB_AZOVD</name>
<feature type="chain" id="PRO_1000206012" description="Probable protein kinase UbiB">
    <location>
        <begin position="1"/>
        <end position="537"/>
    </location>
</feature>
<feature type="transmembrane region" description="Helical" evidence="1">
    <location>
        <begin position="30"/>
        <end position="47"/>
    </location>
</feature>
<feature type="transmembrane region" description="Helical" evidence="1">
    <location>
        <begin position="489"/>
        <end position="507"/>
    </location>
</feature>
<feature type="transmembrane region" description="Helical" evidence="1">
    <location>
        <begin position="513"/>
        <end position="530"/>
    </location>
</feature>
<feature type="domain" description="Protein kinase" evidence="1">
    <location>
        <begin position="126"/>
        <end position="490"/>
    </location>
</feature>
<feature type="active site" description="Proton acceptor" evidence="1">
    <location>
        <position position="289"/>
    </location>
</feature>
<feature type="binding site" evidence="1">
    <location>
        <begin position="132"/>
        <end position="140"/>
    </location>
    <ligand>
        <name>ATP</name>
        <dbReference type="ChEBI" id="CHEBI:30616"/>
    </ligand>
</feature>
<feature type="binding site" evidence="1">
    <location>
        <position position="154"/>
    </location>
    <ligand>
        <name>ATP</name>
        <dbReference type="ChEBI" id="CHEBI:30616"/>
    </ligand>
</feature>
<gene>
    <name evidence="1" type="primary">ubiB</name>
    <name type="ordered locus">Avin_45430</name>
</gene>
<dbReference type="EC" id="2.7.-.-" evidence="1"/>
<dbReference type="EMBL" id="CP001157">
    <property type="protein sequence ID" value="ACO80657.1"/>
    <property type="molecule type" value="Genomic_DNA"/>
</dbReference>
<dbReference type="RefSeq" id="WP_012703024.1">
    <property type="nucleotide sequence ID" value="NC_012560.1"/>
</dbReference>
<dbReference type="SMR" id="C1DHS4"/>
<dbReference type="STRING" id="322710.Avin_45430"/>
<dbReference type="EnsemblBacteria" id="ACO80657">
    <property type="protein sequence ID" value="ACO80657"/>
    <property type="gene ID" value="Avin_45430"/>
</dbReference>
<dbReference type="GeneID" id="88187427"/>
<dbReference type="KEGG" id="avn:Avin_45430"/>
<dbReference type="eggNOG" id="COG0661">
    <property type="taxonomic scope" value="Bacteria"/>
</dbReference>
<dbReference type="HOGENOM" id="CLU_006533_0_0_6"/>
<dbReference type="OrthoDB" id="9795390at2"/>
<dbReference type="UniPathway" id="UPA00232"/>
<dbReference type="Proteomes" id="UP000002424">
    <property type="component" value="Chromosome"/>
</dbReference>
<dbReference type="GO" id="GO:0005886">
    <property type="term" value="C:plasma membrane"/>
    <property type="evidence" value="ECO:0007669"/>
    <property type="project" value="UniProtKB-SubCell"/>
</dbReference>
<dbReference type="GO" id="GO:0005524">
    <property type="term" value="F:ATP binding"/>
    <property type="evidence" value="ECO:0007669"/>
    <property type="project" value="UniProtKB-KW"/>
</dbReference>
<dbReference type="GO" id="GO:0004672">
    <property type="term" value="F:protein kinase activity"/>
    <property type="evidence" value="ECO:0007669"/>
    <property type="project" value="UniProtKB-UniRule"/>
</dbReference>
<dbReference type="GO" id="GO:0010795">
    <property type="term" value="P:regulation of ubiquinone biosynthetic process"/>
    <property type="evidence" value="ECO:0007669"/>
    <property type="project" value="UniProtKB-UniRule"/>
</dbReference>
<dbReference type="GO" id="GO:0006744">
    <property type="term" value="P:ubiquinone biosynthetic process"/>
    <property type="evidence" value="ECO:0007669"/>
    <property type="project" value="UniProtKB-UniPathway"/>
</dbReference>
<dbReference type="CDD" id="cd13972">
    <property type="entry name" value="UbiB"/>
    <property type="match status" value="1"/>
</dbReference>
<dbReference type="HAMAP" id="MF_00414">
    <property type="entry name" value="UbiB"/>
    <property type="match status" value="1"/>
</dbReference>
<dbReference type="InterPro" id="IPR004147">
    <property type="entry name" value="ABC1_dom"/>
</dbReference>
<dbReference type="InterPro" id="IPR011009">
    <property type="entry name" value="Kinase-like_dom_sf"/>
</dbReference>
<dbReference type="InterPro" id="IPR010232">
    <property type="entry name" value="UbiB"/>
</dbReference>
<dbReference type="InterPro" id="IPR045308">
    <property type="entry name" value="UbiB_bact"/>
</dbReference>
<dbReference type="InterPro" id="IPR050154">
    <property type="entry name" value="UbiB_kinase"/>
</dbReference>
<dbReference type="NCBIfam" id="NF003404">
    <property type="entry name" value="PRK04750.1"/>
    <property type="match status" value="1"/>
</dbReference>
<dbReference type="NCBIfam" id="TIGR01982">
    <property type="entry name" value="UbiB"/>
    <property type="match status" value="1"/>
</dbReference>
<dbReference type="PANTHER" id="PTHR10566">
    <property type="entry name" value="CHAPERONE-ACTIVITY OF BC1 COMPLEX CABC1 -RELATED"/>
    <property type="match status" value="1"/>
</dbReference>
<dbReference type="PANTHER" id="PTHR10566:SF113">
    <property type="entry name" value="PROTEIN ACTIVITY OF BC1 COMPLEX KINASE 7, CHLOROPLASTIC"/>
    <property type="match status" value="1"/>
</dbReference>
<dbReference type="Pfam" id="PF03109">
    <property type="entry name" value="ABC1"/>
    <property type="match status" value="1"/>
</dbReference>
<dbReference type="SUPFAM" id="SSF56112">
    <property type="entry name" value="Protein kinase-like (PK-like)"/>
    <property type="match status" value="1"/>
</dbReference>
<protein>
    <recommendedName>
        <fullName evidence="1">Probable protein kinase UbiB</fullName>
        <ecNumber evidence="1">2.7.-.-</ecNumber>
    </recommendedName>
    <alternativeName>
        <fullName evidence="1">Ubiquinone biosynthesis protein UbiB</fullName>
    </alternativeName>
</protein>
<keyword id="KW-0067">ATP-binding</keyword>
<keyword id="KW-0997">Cell inner membrane</keyword>
<keyword id="KW-1003">Cell membrane</keyword>
<keyword id="KW-0418">Kinase</keyword>
<keyword id="KW-0472">Membrane</keyword>
<keyword id="KW-0547">Nucleotide-binding</keyword>
<keyword id="KW-0808">Transferase</keyword>
<keyword id="KW-0812">Transmembrane</keyword>
<keyword id="KW-1133">Transmembrane helix</keyword>
<keyword id="KW-0831">Ubiquinone biosynthesis</keyword>
<organism>
    <name type="scientific">Azotobacter vinelandii (strain DJ / ATCC BAA-1303)</name>
    <dbReference type="NCBI Taxonomy" id="322710"/>
    <lineage>
        <taxon>Bacteria</taxon>
        <taxon>Pseudomonadati</taxon>
        <taxon>Pseudomonadota</taxon>
        <taxon>Gammaproteobacteria</taxon>
        <taxon>Pseudomonadales</taxon>
        <taxon>Pseudomonadaceae</taxon>
        <taxon>Azotobacter</taxon>
    </lineage>
</organism>
<accession>C1DHS4</accession>
<reference key="1">
    <citation type="journal article" date="2009" name="J. Bacteriol.">
        <title>Genome sequence of Azotobacter vinelandii, an obligate aerobe specialized to support diverse anaerobic metabolic processes.</title>
        <authorList>
            <person name="Setubal J.C."/>
            <person name="Dos Santos P."/>
            <person name="Goldman B.S."/>
            <person name="Ertesvaag H."/>
            <person name="Espin G."/>
            <person name="Rubio L.M."/>
            <person name="Valla S."/>
            <person name="Almeida N.F."/>
            <person name="Balasubramanian D."/>
            <person name="Cromes L."/>
            <person name="Curatti L."/>
            <person name="Du Z."/>
            <person name="Godsy E."/>
            <person name="Goodner B."/>
            <person name="Hellner-Burris K."/>
            <person name="Hernandez J.A."/>
            <person name="Houmiel K."/>
            <person name="Imperial J."/>
            <person name="Kennedy C."/>
            <person name="Larson T.J."/>
            <person name="Latreille P."/>
            <person name="Ligon L.S."/>
            <person name="Lu J."/>
            <person name="Maerk M."/>
            <person name="Miller N.M."/>
            <person name="Norton S."/>
            <person name="O'Carroll I.P."/>
            <person name="Paulsen I."/>
            <person name="Raulfs E.C."/>
            <person name="Roemer R."/>
            <person name="Rosser J."/>
            <person name="Segura D."/>
            <person name="Slater S."/>
            <person name="Stricklin S.L."/>
            <person name="Studholme D.J."/>
            <person name="Sun J."/>
            <person name="Viana C.J."/>
            <person name="Wallin E."/>
            <person name="Wang B."/>
            <person name="Wheeler C."/>
            <person name="Zhu H."/>
            <person name="Dean D.R."/>
            <person name="Dixon R."/>
            <person name="Wood D."/>
        </authorList>
    </citation>
    <scope>NUCLEOTIDE SEQUENCE [LARGE SCALE GENOMIC DNA]</scope>
    <source>
        <strain>DJ / ATCC BAA-1303</strain>
    </source>
</reference>
<evidence type="ECO:0000255" key="1">
    <source>
        <dbReference type="HAMAP-Rule" id="MF_00414"/>
    </source>
</evidence>
<proteinExistence type="inferred from homology"/>